<gene>
    <name evidence="5" type="primary">GAF1</name>
    <name evidence="5" type="synonym">RPP30</name>
    <name evidence="7" type="ordered locus">At5g59980</name>
    <name evidence="8" type="ORF">MMN10.23</name>
</gene>
<dbReference type="EC" id="3.1.26.-" evidence="2"/>
<dbReference type="EMBL" id="AB015475">
    <property type="protein sequence ID" value="BAB08366.1"/>
    <property type="status" value="ALT_SEQ"/>
    <property type="molecule type" value="Genomic_DNA"/>
</dbReference>
<dbReference type="EMBL" id="CP002688">
    <property type="protein sequence ID" value="AED97261.1"/>
    <property type="molecule type" value="Genomic_DNA"/>
</dbReference>
<dbReference type="RefSeq" id="NP_200806.2">
    <property type="nucleotide sequence ID" value="NM_125391.3"/>
</dbReference>
<dbReference type="SMR" id="F4JXF1"/>
<dbReference type="FunCoup" id="F4JXF1">
    <property type="interactions" value="495"/>
</dbReference>
<dbReference type="STRING" id="3702.F4JXF1"/>
<dbReference type="iPTMnet" id="F4JXF1"/>
<dbReference type="PaxDb" id="3702-AT5G59980.2"/>
<dbReference type="ProteomicsDB" id="204175"/>
<dbReference type="EnsemblPlants" id="AT5G59980.1">
    <property type="protein sequence ID" value="AT5G59980.1"/>
    <property type="gene ID" value="AT5G59980"/>
</dbReference>
<dbReference type="GeneID" id="836120"/>
<dbReference type="Gramene" id="AT5G59980.1">
    <property type="protein sequence ID" value="AT5G59980.1"/>
    <property type="gene ID" value="AT5G59980"/>
</dbReference>
<dbReference type="KEGG" id="ath:AT5G59980"/>
<dbReference type="Araport" id="AT5G59980"/>
<dbReference type="TAIR" id="AT5G59980">
    <property type="gene designation" value="GAF1"/>
</dbReference>
<dbReference type="HOGENOM" id="CLU_023213_0_0_1"/>
<dbReference type="InParanoid" id="F4JXF1"/>
<dbReference type="PRO" id="PR:F4JXF1"/>
<dbReference type="Proteomes" id="UP000006548">
    <property type="component" value="Chromosome 5"/>
</dbReference>
<dbReference type="ExpressionAtlas" id="F4JXF1">
    <property type="expression patterns" value="baseline and differential"/>
</dbReference>
<dbReference type="GO" id="GO:0005739">
    <property type="term" value="C:mitochondrion"/>
    <property type="evidence" value="ECO:0000314"/>
    <property type="project" value="UniProtKB"/>
</dbReference>
<dbReference type="GO" id="GO:0005730">
    <property type="term" value="C:nucleolus"/>
    <property type="evidence" value="ECO:0007669"/>
    <property type="project" value="UniProtKB-SubCell"/>
</dbReference>
<dbReference type="GO" id="GO:0005634">
    <property type="term" value="C:nucleus"/>
    <property type="evidence" value="ECO:0000314"/>
    <property type="project" value="UniProtKB"/>
</dbReference>
<dbReference type="GO" id="GO:0016787">
    <property type="term" value="F:hydrolase activity"/>
    <property type="evidence" value="ECO:0007669"/>
    <property type="project" value="UniProtKB-KW"/>
</dbReference>
<dbReference type="GO" id="GO:0006364">
    <property type="term" value="P:rRNA processing"/>
    <property type="evidence" value="ECO:0007669"/>
    <property type="project" value="UniProtKB-KW"/>
</dbReference>
<dbReference type="GO" id="GO:0008033">
    <property type="term" value="P:tRNA processing"/>
    <property type="evidence" value="ECO:0007669"/>
    <property type="project" value="UniProtKB-KW"/>
</dbReference>
<dbReference type="FunFam" id="3.20.20.140:FF:000044">
    <property type="entry name" value="Polymerase/histidinol phosphatase-like protein"/>
    <property type="match status" value="1"/>
</dbReference>
<dbReference type="Gene3D" id="3.20.20.140">
    <property type="entry name" value="Metal-dependent hydrolases"/>
    <property type="match status" value="1"/>
</dbReference>
<dbReference type="InterPro" id="IPR016195">
    <property type="entry name" value="Pol/histidinol_Pase-like"/>
</dbReference>
<dbReference type="InterPro" id="IPR002738">
    <property type="entry name" value="RNase_P_p30"/>
</dbReference>
<dbReference type="PANTHER" id="PTHR13031:SF0">
    <property type="entry name" value="RIBONUCLEASE P PROTEIN SUBUNIT P30"/>
    <property type="match status" value="1"/>
</dbReference>
<dbReference type="PANTHER" id="PTHR13031">
    <property type="entry name" value="RIBONUCLEASE P SUBUNIT P30"/>
    <property type="match status" value="1"/>
</dbReference>
<dbReference type="Pfam" id="PF01876">
    <property type="entry name" value="RNase_P_p30"/>
    <property type="match status" value="1"/>
</dbReference>
<dbReference type="SUPFAM" id="SSF89550">
    <property type="entry name" value="PHP domain-like"/>
    <property type="match status" value="1"/>
</dbReference>
<feature type="chain" id="PRO_0000448555" description="Protein GAMETOPHYTE DEFECTIVE 1">
    <location>
        <begin position="1"/>
        <end position="581"/>
    </location>
</feature>
<feature type="region of interest" description="Disordered" evidence="3">
    <location>
        <begin position="452"/>
        <end position="512"/>
    </location>
</feature>
<feature type="compositionally biased region" description="Polar residues" evidence="3">
    <location>
        <begin position="452"/>
        <end position="467"/>
    </location>
</feature>
<feature type="compositionally biased region" description="Basic and acidic residues" evidence="3">
    <location>
        <begin position="496"/>
        <end position="512"/>
    </location>
</feature>
<comment type="function">
    <text evidence="2 4">Probable component of ribonuclease P, a ribonucleoprotein complex that generates mature tRNA molecules by cleaving their 5'-ends (By similarity). May also be a component of the MRP ribonuclease complex, which cleaves pre-rRNA sequences (By similarity). Required for female gametophyte development and male competence (PubMed:22509260).</text>
</comment>
<comment type="subunit">
    <text evidence="2 4">Probable component of nuclear RNase P and RNase MRP ribonucleoproteins (By similarity). Interacts with POP5 (PubMed:22509260).</text>
</comment>
<comment type="subcellular location">
    <subcellularLocation>
        <location evidence="1">Nucleus</location>
        <location evidence="1">Nucleolus</location>
    </subcellularLocation>
    <subcellularLocation>
        <location evidence="4">Nucleus</location>
    </subcellularLocation>
    <subcellularLocation>
        <location evidence="4">Mitochondrion</location>
    </subcellularLocation>
</comment>
<comment type="tissue specificity">
    <text evidence="4">Mostly expressed in inflorescence and roots, to a lower extent in leaves, and, at low levels, in siliques, seedlings and stems.</text>
</comment>
<comment type="developmental stage">
    <text evidence="4">Expressed in seedlings, young leaves, root tips and lateral primordia (PubMed:22509260). In reproductive organs, present in the inflorescence, especially in pollen grains, nucellar cells and embryo sacs (PubMed:22509260).</text>
</comment>
<comment type="disruption phenotype">
    <text evidence="4">Impaired progression of the gametophytic division during female gametogenesis leading to arrested embryo sacs at stages ranging from FG1 to FG7 (PubMed:22509260). Normal pollen development, but weaker pollen tube fitness associated with a reduced transmission through the male gametes (PubMed:22509260).</text>
</comment>
<comment type="similarity">
    <text evidence="6">Belongs to the eukaryotic/archaeal RNase P protein component 3 family.</text>
</comment>
<comment type="sequence caution" evidence="6">
    <conflict type="erroneous gene model prediction">
        <sequence resource="EMBL-CDS" id="BAB08366"/>
    </conflict>
</comment>
<name>GAF1_ARATH</name>
<accession>F4JXF1</accession>
<accession>Q9FJD9</accession>
<reference key="1">
    <citation type="journal article" date="1998" name="DNA Res.">
        <title>Structural analysis of Arabidopsis thaliana chromosome 5. VII. Sequence features of the regions of 1,013,767 bp covered by sixteen physically assigned P1 and TAC clones.</title>
        <authorList>
            <person name="Nakamura Y."/>
            <person name="Sato S."/>
            <person name="Asamizu E."/>
            <person name="Kaneko T."/>
            <person name="Kotani H."/>
            <person name="Miyajima N."/>
            <person name="Tabata S."/>
        </authorList>
    </citation>
    <scope>NUCLEOTIDE SEQUENCE [LARGE SCALE GENOMIC DNA]</scope>
    <source>
        <strain>cv. Columbia</strain>
    </source>
</reference>
<reference key="2">
    <citation type="journal article" date="2017" name="Plant J.">
        <title>Araport11: a complete reannotation of the Arabidopsis thaliana reference genome.</title>
        <authorList>
            <person name="Cheng C.Y."/>
            <person name="Krishnakumar V."/>
            <person name="Chan A.P."/>
            <person name="Thibaud-Nissen F."/>
            <person name="Schobel S."/>
            <person name="Town C.D."/>
        </authorList>
    </citation>
    <scope>GENOME REANNOTATION</scope>
    <source>
        <strain>cv. Columbia</strain>
    </source>
</reference>
<reference key="3">
    <citation type="journal article" date="2012" name="PLoS ONE">
        <title>GAMETOPHYTE DEFECTIVE 1, a putative subunit of RNases P/MRP, is essential for female gametogenesis and male competence in Arabidopsis.</title>
        <authorList>
            <person name="Wang S.-Q."/>
            <person name="Shi D.-Q."/>
            <person name="Long Y.-P."/>
            <person name="Liu J."/>
            <person name="Yang W.-C."/>
        </authorList>
    </citation>
    <scope>FUNCTION</scope>
    <scope>DISRUPTION PHENOTYPE</scope>
    <scope>INTERACTION WITH POP5</scope>
    <scope>TISSUE SPECIFICITY</scope>
    <scope>DEVELOPMENTAL STAGE</scope>
    <scope>SUBCELLULAR LOCATION</scope>
</reference>
<keyword id="KW-0378">Hydrolase</keyword>
<keyword id="KW-0496">Mitochondrion</keyword>
<keyword id="KW-0539">Nucleus</keyword>
<keyword id="KW-1185">Reference proteome</keyword>
<keyword id="KW-0698">rRNA processing</keyword>
<keyword id="KW-0819">tRNA processing</keyword>
<organism>
    <name type="scientific">Arabidopsis thaliana</name>
    <name type="common">Mouse-ear cress</name>
    <dbReference type="NCBI Taxonomy" id="3702"/>
    <lineage>
        <taxon>Eukaryota</taxon>
        <taxon>Viridiplantae</taxon>
        <taxon>Streptophyta</taxon>
        <taxon>Embryophyta</taxon>
        <taxon>Tracheophyta</taxon>
        <taxon>Spermatophyta</taxon>
        <taxon>Magnoliopsida</taxon>
        <taxon>eudicotyledons</taxon>
        <taxon>Gunneridae</taxon>
        <taxon>Pentapetalae</taxon>
        <taxon>rosids</taxon>
        <taxon>malvids</taxon>
        <taxon>Brassicales</taxon>
        <taxon>Brassicaceae</taxon>
        <taxon>Camelineae</taxon>
        <taxon>Arabidopsis</taxon>
    </lineage>
</organism>
<evidence type="ECO:0000250" key="1">
    <source>
        <dbReference type="UniProtKB" id="P38786"/>
    </source>
</evidence>
<evidence type="ECO:0000250" key="2">
    <source>
        <dbReference type="UniProtKB" id="P78346"/>
    </source>
</evidence>
<evidence type="ECO:0000256" key="3">
    <source>
        <dbReference type="SAM" id="MobiDB-lite"/>
    </source>
</evidence>
<evidence type="ECO:0000269" key="4">
    <source>
    </source>
</evidence>
<evidence type="ECO:0000303" key="5">
    <source>
    </source>
</evidence>
<evidence type="ECO:0000305" key="6"/>
<evidence type="ECO:0000312" key="7">
    <source>
        <dbReference type="Araport" id="AT5G59980"/>
    </source>
</evidence>
<evidence type="ECO:0000312" key="8">
    <source>
        <dbReference type="EMBL" id="BAB08366.1"/>
    </source>
</evidence>
<proteinExistence type="evidence at protein level"/>
<sequence length="581" mass="64079">MGFFDLSIPYNEPPRSGGKEIAGGKTLRLKLATKAMELGYVGIAHNRSIKGVMSDKDSCTIPLLTLGSLIKVAPRLASSVGFHRDLLGVPRTTPFRQYTRLTVHVESNAQCQSLNSGNPILKSYDIIAVRPMNQNAFDYACEKAEVDLISIDFTDKMLFRLKHPMVKAAIQRGIYFEIKYSDILMDAQTRRQVISNAKLLVDWTRGKNLIISSGAPSVTELRGPNDVINLMFLLGLSAERARAAISKNCRNMIAKVLKKKRFHKEAVRVELLSAGDTFSLEQPLSEDCMKWDRLSSGEGDMLLDDLAKAFDATNVVAHKSSKAIDFTSVLDGLPKHGFRVKDIVGTESVTQPSAAKVIDTQVHSSNQVSELRMATASSDDNLREIETISQIDMLMSEDDNKVEPTTNVLKEEAFALRKCSASHGQGILVQNQTATPFTLTRCTKSEAASDVSMNIESTSEGGSMSPSKSDHGIPQSPVEVNNMGNAAFEEEASVDENSKERATTGHASNDEMHITESGHHASIDDEKHIPEPEHLTSIADEMKIDCSSEANHDEYMEVTMEDQMHETVQMRLCKTMTKHQD</sequence>
<protein>
    <recommendedName>
        <fullName evidence="5">Protein GAMETOPHYTE DEFECTIVE 1</fullName>
    </recommendedName>
    <alternativeName>
        <fullName evidence="5">Probable ribonuclease P protein subunit p30</fullName>
        <shortName evidence="5">AtRPP30</shortName>
        <shortName evidence="5">RNaseP protein p30</shortName>
        <ecNumber evidence="2">3.1.26.-</ecNumber>
    </alternativeName>
</protein>